<reference key="1">
    <citation type="journal article" date="2004" name="Nature">
        <title>Genome evolution in yeasts.</title>
        <authorList>
            <person name="Dujon B."/>
            <person name="Sherman D."/>
            <person name="Fischer G."/>
            <person name="Durrens P."/>
            <person name="Casaregola S."/>
            <person name="Lafontaine I."/>
            <person name="de Montigny J."/>
            <person name="Marck C."/>
            <person name="Neuveglise C."/>
            <person name="Talla E."/>
            <person name="Goffard N."/>
            <person name="Frangeul L."/>
            <person name="Aigle M."/>
            <person name="Anthouard V."/>
            <person name="Babour A."/>
            <person name="Barbe V."/>
            <person name="Barnay S."/>
            <person name="Blanchin S."/>
            <person name="Beckerich J.-M."/>
            <person name="Beyne E."/>
            <person name="Bleykasten C."/>
            <person name="Boisrame A."/>
            <person name="Boyer J."/>
            <person name="Cattolico L."/>
            <person name="Confanioleri F."/>
            <person name="de Daruvar A."/>
            <person name="Despons L."/>
            <person name="Fabre E."/>
            <person name="Fairhead C."/>
            <person name="Ferry-Dumazet H."/>
            <person name="Groppi A."/>
            <person name="Hantraye F."/>
            <person name="Hennequin C."/>
            <person name="Jauniaux N."/>
            <person name="Joyet P."/>
            <person name="Kachouri R."/>
            <person name="Kerrest A."/>
            <person name="Koszul R."/>
            <person name="Lemaire M."/>
            <person name="Lesur I."/>
            <person name="Ma L."/>
            <person name="Muller H."/>
            <person name="Nicaud J.-M."/>
            <person name="Nikolski M."/>
            <person name="Oztas S."/>
            <person name="Ozier-Kalogeropoulos O."/>
            <person name="Pellenz S."/>
            <person name="Potier S."/>
            <person name="Richard G.-F."/>
            <person name="Straub M.-L."/>
            <person name="Suleau A."/>
            <person name="Swennen D."/>
            <person name="Tekaia F."/>
            <person name="Wesolowski-Louvel M."/>
            <person name="Westhof E."/>
            <person name="Wirth B."/>
            <person name="Zeniou-Meyer M."/>
            <person name="Zivanovic Y."/>
            <person name="Bolotin-Fukuhara M."/>
            <person name="Thierry A."/>
            <person name="Bouchier C."/>
            <person name="Caudron B."/>
            <person name="Scarpelli C."/>
            <person name="Gaillardin C."/>
            <person name="Weissenbach J."/>
            <person name="Wincker P."/>
            <person name="Souciet J.-L."/>
        </authorList>
    </citation>
    <scope>NUCLEOTIDE SEQUENCE [LARGE SCALE GENOMIC DNA]</scope>
    <source>
        <strain>ATCC 2001 / BCRC 20586 / JCM 3761 / NBRC 0622 / NRRL Y-65 / CBS 138</strain>
    </source>
</reference>
<evidence type="ECO:0000250" key="1"/>
<evidence type="ECO:0000255" key="2"/>
<evidence type="ECO:0000256" key="3">
    <source>
        <dbReference type="SAM" id="MobiDB-lite"/>
    </source>
</evidence>
<evidence type="ECO:0000305" key="4"/>
<organism>
    <name type="scientific">Candida glabrata (strain ATCC 2001 / BCRC 20586 / JCM 3761 / NBRC 0622 / NRRL Y-65 / CBS 138)</name>
    <name type="common">Yeast</name>
    <name type="synonym">Nakaseomyces glabratus</name>
    <dbReference type="NCBI Taxonomy" id="284593"/>
    <lineage>
        <taxon>Eukaryota</taxon>
        <taxon>Fungi</taxon>
        <taxon>Dikarya</taxon>
        <taxon>Ascomycota</taxon>
        <taxon>Saccharomycotina</taxon>
        <taxon>Saccharomycetes</taxon>
        <taxon>Saccharomycetales</taxon>
        <taxon>Saccharomycetaceae</taxon>
        <taxon>Nakaseomyces</taxon>
    </lineage>
</organism>
<feature type="transit peptide" description="Mitochondrion" evidence="2">
    <location>
        <begin position="1"/>
        <end status="unknown"/>
    </location>
</feature>
<feature type="chain" id="PRO_0000405490" description="Mitochondrial zinc maintenance protein 1, mitochondrial">
    <location>
        <begin status="unknown"/>
        <end position="115"/>
    </location>
</feature>
<feature type="region of interest" description="Disordered" evidence="3">
    <location>
        <begin position="96"/>
        <end position="115"/>
    </location>
</feature>
<feature type="compositionally biased region" description="Basic residues" evidence="3">
    <location>
        <begin position="102"/>
        <end position="115"/>
    </location>
</feature>
<keyword id="KW-0143">Chaperone</keyword>
<keyword id="KW-0496">Mitochondrion</keyword>
<keyword id="KW-1185">Reference proteome</keyword>
<keyword id="KW-0809">Transit peptide</keyword>
<protein>
    <recommendedName>
        <fullName>Mitochondrial zinc maintenance protein 1, mitochondrial</fullName>
    </recommendedName>
</protein>
<proteinExistence type="inferred from homology"/>
<gene>
    <name type="primary">MZM1</name>
    <name type="ordered locus">CAGL0G04653g</name>
</gene>
<name>MZM1_CANGA</name>
<accession>Q6FT82</accession>
<comment type="function">
    <text evidence="1">Assembly factor required for Rieske Fe-S protein RIP1 incorporation into the cytochrome b-c1 (CIII) complex. Functions as a chaperone, binding to this subunit within the mitochondrial matrix and stabilizing it prior to its translocation and insertion into the late CIII dimeric intermediate within the mitochondrial inner membrane. Modulates the mitochondrial matrix zinc pool (By similarity).</text>
</comment>
<comment type="subunit">
    <text evidence="1">Interacts with RIP1.</text>
</comment>
<comment type="subcellular location">
    <subcellularLocation>
        <location evidence="1">Mitochondrion matrix</location>
    </subcellularLocation>
</comment>
<comment type="similarity">
    <text evidence="4">Belongs to the complex I LYR family. MZM1 subfamily.</text>
</comment>
<sequence>MIPEALRKQALIAYKHGLRATRVAFDGDNRVLLAARAEMRKGMENPDSSKTTQEQIQHLEEVATFLKRNLVQGQKIEGEEKYHLKIHKDIELGDNESIKQPTKFKARPFKKCSDN</sequence>
<dbReference type="EMBL" id="CR380953">
    <property type="protein sequence ID" value="CAG59489.1"/>
    <property type="molecule type" value="Genomic_DNA"/>
</dbReference>
<dbReference type="RefSeq" id="XP_446562.1">
    <property type="nucleotide sequence ID" value="XM_446562.1"/>
</dbReference>
<dbReference type="SMR" id="Q6FT82"/>
<dbReference type="FunCoup" id="Q6FT82">
    <property type="interactions" value="27"/>
</dbReference>
<dbReference type="STRING" id="284593.Q6FT82"/>
<dbReference type="EnsemblFungi" id="CAGL0G04653g-T">
    <property type="protein sequence ID" value="CAGL0G04653g-T-p1"/>
    <property type="gene ID" value="CAGL0G04653g"/>
</dbReference>
<dbReference type="KEGG" id="cgr:2888026"/>
<dbReference type="CGD" id="CAL0129321">
    <property type="gene designation" value="CAGL0G04653g"/>
</dbReference>
<dbReference type="VEuPathDB" id="FungiDB:B1J91_G04653g"/>
<dbReference type="VEuPathDB" id="FungiDB:CAGL0G04653g"/>
<dbReference type="eggNOG" id="ENOG502S6EF">
    <property type="taxonomic scope" value="Eukaryota"/>
</dbReference>
<dbReference type="HOGENOM" id="CLU_147114_2_2_1"/>
<dbReference type="InParanoid" id="Q6FT82"/>
<dbReference type="Proteomes" id="UP000002428">
    <property type="component" value="Chromosome G"/>
</dbReference>
<dbReference type="GO" id="GO:0005759">
    <property type="term" value="C:mitochondrial matrix"/>
    <property type="evidence" value="ECO:0007669"/>
    <property type="project" value="UniProtKB-SubCell"/>
</dbReference>
<dbReference type="GO" id="GO:0044183">
    <property type="term" value="F:protein folding chaperone"/>
    <property type="evidence" value="ECO:0007669"/>
    <property type="project" value="EnsemblFungi"/>
</dbReference>
<dbReference type="GO" id="GO:0034551">
    <property type="term" value="P:mitochondrial respiratory chain complex III assembly"/>
    <property type="evidence" value="ECO:0007669"/>
    <property type="project" value="EnsemblFungi"/>
</dbReference>
<dbReference type="CDD" id="cd20267">
    <property type="entry name" value="Complex1_LYR_LYRM7"/>
    <property type="match status" value="1"/>
</dbReference>
<dbReference type="InterPro" id="IPR045298">
    <property type="entry name" value="Complex1_LYR_LYRM7"/>
</dbReference>
<dbReference type="InterPro" id="IPR050435">
    <property type="entry name" value="MZM1/LYRM7"/>
</dbReference>
<dbReference type="PANTHER" id="PTHR46749">
    <property type="entry name" value="COMPLEX III ASSEMBLY FACTOR LYRM7"/>
    <property type="match status" value="1"/>
</dbReference>
<dbReference type="PANTHER" id="PTHR46749:SF1">
    <property type="entry name" value="COMPLEX III ASSEMBLY FACTOR LYRM7"/>
    <property type="match status" value="1"/>
</dbReference>